<organism>
    <name type="scientific">Oryza sativa subsp. indica</name>
    <name type="common">Rice</name>
    <dbReference type="NCBI Taxonomy" id="39946"/>
    <lineage>
        <taxon>Eukaryota</taxon>
        <taxon>Viridiplantae</taxon>
        <taxon>Streptophyta</taxon>
        <taxon>Embryophyta</taxon>
        <taxon>Tracheophyta</taxon>
        <taxon>Spermatophyta</taxon>
        <taxon>Magnoliopsida</taxon>
        <taxon>Liliopsida</taxon>
        <taxon>Poales</taxon>
        <taxon>Poaceae</taxon>
        <taxon>BOP clade</taxon>
        <taxon>Oryzoideae</taxon>
        <taxon>Oryzeae</taxon>
        <taxon>Oryzinae</taxon>
        <taxon>Oryza</taxon>
        <taxon>Oryza sativa</taxon>
    </lineage>
</organism>
<protein>
    <recommendedName>
        <fullName>Ferredoxin--NADP reductase, leaf isozyme 2, chloroplastic</fullName>
        <ecNumber evidence="5">1.18.1.2</ecNumber>
    </recommendedName>
    <alternativeName>
        <fullName evidence="8">Leaf FNR 2</fullName>
        <shortName evidence="8">FNR-2</shortName>
        <shortName evidence="8">Os-LFNR2</shortName>
    </alternativeName>
</protein>
<dbReference type="EC" id="1.18.1.2" evidence="5"/>
<dbReference type="EMBL" id="CM000127">
    <property type="protein sequence ID" value="EAY84091.1"/>
    <property type="molecule type" value="Genomic_DNA"/>
</dbReference>
<dbReference type="SMR" id="A2WZT1"/>
<dbReference type="STRING" id="39946.A2WZT1"/>
<dbReference type="EnsemblPlants" id="BGIOSGA007302-TA">
    <property type="protein sequence ID" value="BGIOSGA007302-PA"/>
    <property type="gene ID" value="BGIOSGA007302"/>
</dbReference>
<dbReference type="EnsemblPlants" id="OsKYG_02g0000330.01">
    <property type="protein sequence ID" value="OsKYG_02g0000330.01"/>
    <property type="gene ID" value="OsKYG_02g0000330"/>
</dbReference>
<dbReference type="EnsemblPlants" id="OsMH63_02G000340_01">
    <property type="protein sequence ID" value="OsMH63_02G000340_01"/>
    <property type="gene ID" value="OsMH63_02G000340"/>
</dbReference>
<dbReference type="EnsemblPlants" id="OsPr106_02g0000350.01">
    <property type="protein sequence ID" value="OsPr106_02g0000350.01"/>
    <property type="gene ID" value="OsPr106_02g0000350"/>
</dbReference>
<dbReference type="Gramene" id="BGIOSGA007302-TA">
    <property type="protein sequence ID" value="BGIOSGA007302-PA"/>
    <property type="gene ID" value="BGIOSGA007302"/>
</dbReference>
<dbReference type="Gramene" id="OsKYG_02g0000330.01">
    <property type="protein sequence ID" value="OsKYG_02g0000330.01"/>
    <property type="gene ID" value="OsKYG_02g0000330"/>
</dbReference>
<dbReference type="Gramene" id="OsMH63_02G000340_01">
    <property type="protein sequence ID" value="OsMH63_02G000340_01"/>
    <property type="gene ID" value="OsMH63_02G000340"/>
</dbReference>
<dbReference type="Gramene" id="OsPr106_02g0000350.01">
    <property type="protein sequence ID" value="OsPr106_02g0000350.01"/>
    <property type="gene ID" value="OsPr106_02g0000350"/>
</dbReference>
<dbReference type="HOGENOM" id="CLU_053066_0_0_1"/>
<dbReference type="OMA" id="ICIRVTK"/>
<dbReference type="UniPathway" id="UPA00091"/>
<dbReference type="Proteomes" id="UP000007015">
    <property type="component" value="Chromosome 2"/>
</dbReference>
<dbReference type="GO" id="GO:0009570">
    <property type="term" value="C:chloroplast stroma"/>
    <property type="evidence" value="ECO:0007669"/>
    <property type="project" value="UniProtKB-SubCell"/>
</dbReference>
<dbReference type="GO" id="GO:0098807">
    <property type="term" value="C:chloroplast thylakoid membrane protein complex"/>
    <property type="evidence" value="ECO:0000250"/>
    <property type="project" value="UniProtKB"/>
</dbReference>
<dbReference type="GO" id="GO:0004324">
    <property type="term" value="F:ferredoxin-NADP+ reductase activity"/>
    <property type="evidence" value="ECO:0007669"/>
    <property type="project" value="UniProtKB-EC"/>
</dbReference>
<dbReference type="GO" id="GO:0015979">
    <property type="term" value="P:photosynthesis"/>
    <property type="evidence" value="ECO:0007669"/>
    <property type="project" value="UniProtKB-UniPathway"/>
</dbReference>
<dbReference type="CDD" id="cd06208">
    <property type="entry name" value="CYPOR_like_FNR"/>
    <property type="match status" value="1"/>
</dbReference>
<dbReference type="FunFam" id="2.40.30.10:FF:000048">
    <property type="entry name" value="Ferredoxin--NADP reductase, chloroplastic"/>
    <property type="match status" value="1"/>
</dbReference>
<dbReference type="FunFam" id="3.40.50.80:FF:000008">
    <property type="entry name" value="Ferredoxin--NADP reductase, chloroplastic"/>
    <property type="match status" value="1"/>
</dbReference>
<dbReference type="Gene3D" id="3.40.50.80">
    <property type="entry name" value="Nucleotide-binding domain of ferredoxin-NADP reductase (FNR) module"/>
    <property type="match status" value="1"/>
</dbReference>
<dbReference type="Gene3D" id="2.40.30.10">
    <property type="entry name" value="Translation factors"/>
    <property type="match status" value="1"/>
</dbReference>
<dbReference type="InterPro" id="IPR017927">
    <property type="entry name" value="FAD-bd_FR_type"/>
</dbReference>
<dbReference type="InterPro" id="IPR001709">
    <property type="entry name" value="Flavoprot_Pyr_Nucl_cyt_Rdtase"/>
</dbReference>
<dbReference type="InterPro" id="IPR015701">
    <property type="entry name" value="FNR"/>
</dbReference>
<dbReference type="InterPro" id="IPR039261">
    <property type="entry name" value="FNR_nucleotide-bd"/>
</dbReference>
<dbReference type="InterPro" id="IPR035442">
    <property type="entry name" value="FNR_plant_Cyanobacteria"/>
</dbReference>
<dbReference type="InterPro" id="IPR001433">
    <property type="entry name" value="OxRdtase_FAD/NAD-bd"/>
</dbReference>
<dbReference type="InterPro" id="IPR017938">
    <property type="entry name" value="Riboflavin_synthase-like_b-brl"/>
</dbReference>
<dbReference type="PANTHER" id="PTHR43314">
    <property type="match status" value="1"/>
</dbReference>
<dbReference type="Pfam" id="PF00175">
    <property type="entry name" value="NAD_binding_1"/>
    <property type="match status" value="1"/>
</dbReference>
<dbReference type="PIRSF" id="PIRSF501178">
    <property type="entry name" value="FNR-PetH"/>
    <property type="match status" value="1"/>
</dbReference>
<dbReference type="PIRSF" id="PIRSF000361">
    <property type="entry name" value="Frd-NADP+_RD"/>
    <property type="match status" value="1"/>
</dbReference>
<dbReference type="PRINTS" id="PR00371">
    <property type="entry name" value="FPNCR"/>
</dbReference>
<dbReference type="SUPFAM" id="SSF52343">
    <property type="entry name" value="Ferredoxin reductase-like, C-terminal NADP-linked domain"/>
    <property type="match status" value="1"/>
</dbReference>
<dbReference type="SUPFAM" id="SSF63380">
    <property type="entry name" value="Riboflavin synthase domain-like"/>
    <property type="match status" value="1"/>
</dbReference>
<dbReference type="PROSITE" id="PS51384">
    <property type="entry name" value="FAD_FR"/>
    <property type="match status" value="1"/>
</dbReference>
<gene>
    <name evidence="9" type="ORF">OsI_05475</name>
</gene>
<reference key="1">
    <citation type="journal article" date="2005" name="PLoS Biol.">
        <title>The genomes of Oryza sativa: a history of duplications.</title>
        <authorList>
            <person name="Yu J."/>
            <person name="Wang J."/>
            <person name="Lin W."/>
            <person name="Li S."/>
            <person name="Li H."/>
            <person name="Zhou J."/>
            <person name="Ni P."/>
            <person name="Dong W."/>
            <person name="Hu S."/>
            <person name="Zeng C."/>
            <person name="Zhang J."/>
            <person name="Zhang Y."/>
            <person name="Li R."/>
            <person name="Xu Z."/>
            <person name="Li S."/>
            <person name="Li X."/>
            <person name="Zheng H."/>
            <person name="Cong L."/>
            <person name="Lin L."/>
            <person name="Yin J."/>
            <person name="Geng J."/>
            <person name="Li G."/>
            <person name="Shi J."/>
            <person name="Liu J."/>
            <person name="Lv H."/>
            <person name="Li J."/>
            <person name="Wang J."/>
            <person name="Deng Y."/>
            <person name="Ran L."/>
            <person name="Shi X."/>
            <person name="Wang X."/>
            <person name="Wu Q."/>
            <person name="Li C."/>
            <person name="Ren X."/>
            <person name="Wang J."/>
            <person name="Wang X."/>
            <person name="Li D."/>
            <person name="Liu D."/>
            <person name="Zhang X."/>
            <person name="Ji Z."/>
            <person name="Zhao W."/>
            <person name="Sun Y."/>
            <person name="Zhang Z."/>
            <person name="Bao J."/>
            <person name="Han Y."/>
            <person name="Dong L."/>
            <person name="Ji J."/>
            <person name="Chen P."/>
            <person name="Wu S."/>
            <person name="Liu J."/>
            <person name="Xiao Y."/>
            <person name="Bu D."/>
            <person name="Tan J."/>
            <person name="Yang L."/>
            <person name="Ye C."/>
            <person name="Zhang J."/>
            <person name="Xu J."/>
            <person name="Zhou Y."/>
            <person name="Yu Y."/>
            <person name="Zhang B."/>
            <person name="Zhuang S."/>
            <person name="Wei H."/>
            <person name="Liu B."/>
            <person name="Lei M."/>
            <person name="Yu H."/>
            <person name="Li Y."/>
            <person name="Xu H."/>
            <person name="Wei S."/>
            <person name="He X."/>
            <person name="Fang L."/>
            <person name="Zhang Z."/>
            <person name="Zhang Y."/>
            <person name="Huang X."/>
            <person name="Su Z."/>
            <person name="Tong W."/>
            <person name="Li J."/>
            <person name="Tong Z."/>
            <person name="Li S."/>
            <person name="Ye J."/>
            <person name="Wang L."/>
            <person name="Fang L."/>
            <person name="Lei T."/>
            <person name="Chen C.-S."/>
            <person name="Chen H.-C."/>
            <person name="Xu Z."/>
            <person name="Li H."/>
            <person name="Huang H."/>
            <person name="Zhang F."/>
            <person name="Xu H."/>
            <person name="Li N."/>
            <person name="Zhao C."/>
            <person name="Li S."/>
            <person name="Dong L."/>
            <person name="Huang Y."/>
            <person name="Li L."/>
            <person name="Xi Y."/>
            <person name="Qi Q."/>
            <person name="Li W."/>
            <person name="Zhang B."/>
            <person name="Hu W."/>
            <person name="Zhang Y."/>
            <person name="Tian X."/>
            <person name="Jiao Y."/>
            <person name="Liang X."/>
            <person name="Jin J."/>
            <person name="Gao L."/>
            <person name="Zheng W."/>
            <person name="Hao B."/>
            <person name="Liu S.-M."/>
            <person name="Wang W."/>
            <person name="Yuan L."/>
            <person name="Cao M."/>
            <person name="McDermott J."/>
            <person name="Samudrala R."/>
            <person name="Wang J."/>
            <person name="Wong G.K.-S."/>
            <person name="Yang H."/>
        </authorList>
    </citation>
    <scope>NUCLEOTIDE SEQUENCE [LARGE SCALE GENOMIC DNA]</scope>
    <source>
        <strain>cv. 93-11</strain>
    </source>
</reference>
<comment type="function">
    <text evidence="5">Plays a key role in regulating the relative amounts of cyclic and non-cyclic electron flow to meet the demands of the plant for ATP and reducing power.</text>
</comment>
<comment type="catalytic activity">
    <reaction evidence="5">
        <text>2 reduced [2Fe-2S]-[ferredoxin] + NADP(+) + H(+) = 2 oxidized [2Fe-2S]-[ferredoxin] + NADPH</text>
        <dbReference type="Rhea" id="RHEA:20125"/>
        <dbReference type="Rhea" id="RHEA-COMP:10000"/>
        <dbReference type="Rhea" id="RHEA-COMP:10001"/>
        <dbReference type="ChEBI" id="CHEBI:15378"/>
        <dbReference type="ChEBI" id="CHEBI:33737"/>
        <dbReference type="ChEBI" id="CHEBI:33738"/>
        <dbReference type="ChEBI" id="CHEBI:57783"/>
        <dbReference type="ChEBI" id="CHEBI:58349"/>
        <dbReference type="EC" id="1.18.1.2"/>
    </reaction>
</comment>
<comment type="cofactor">
    <cofactor evidence="5">
        <name>FAD</name>
        <dbReference type="ChEBI" id="CHEBI:57692"/>
    </cofactor>
</comment>
<comment type="pathway">
    <text evidence="5">Energy metabolism; photosynthesis.</text>
</comment>
<comment type="subunit">
    <text evidence="4 5">Heterodimer with LFNR1 (By similarity). Component of high molecular weight thylakoid LFNRs-containing protein complexes containing LIR1, LFNR1, LFNR2, TIC62 and TROL proteins. Interacts directly with LFNR1 and LFNR2; LIR1 increases the affinity of LFNR1 and LFNR2 for TIC62 and subsequent thylakoid relocalization (By similarity).</text>
</comment>
<comment type="subcellular location">
    <subcellularLocation>
        <location evidence="5">Plastid</location>
        <location evidence="5">Chloroplast stroma</location>
    </subcellularLocation>
    <subcellularLocation>
        <location evidence="5">Plastid</location>
        <location evidence="5">Chloroplast thylakoid membrane</location>
        <topology evidence="5">Peripheral membrane protein</topology>
        <orientation evidence="5">Stromal side</orientation>
    </subcellularLocation>
</comment>
<comment type="PTM">
    <text evidence="4">May form interchain disulfide bonds with LIR1.</text>
</comment>
<comment type="similarity">
    <text evidence="8">Belongs to the ferredoxin--NADP reductase type 1 family.</text>
</comment>
<keyword id="KW-0150">Chloroplast</keyword>
<keyword id="KW-1015">Disulfide bond</keyword>
<keyword id="KW-0249">Electron transport</keyword>
<keyword id="KW-0274">FAD</keyword>
<keyword id="KW-0285">Flavoprotein</keyword>
<keyword id="KW-0472">Membrane</keyword>
<keyword id="KW-0521">NADP</keyword>
<keyword id="KW-0560">Oxidoreductase</keyword>
<keyword id="KW-0597">Phosphoprotein</keyword>
<keyword id="KW-0602">Photosynthesis</keyword>
<keyword id="KW-0934">Plastid</keyword>
<keyword id="KW-1185">Reference proteome</keyword>
<keyword id="KW-0793">Thylakoid</keyword>
<keyword id="KW-0809">Transit peptide</keyword>
<keyword id="KW-0813">Transport</keyword>
<feature type="transit peptide" description="Chloroplast" evidence="6">
    <location>
        <begin position="1"/>
        <end position="48"/>
    </location>
</feature>
<feature type="chain" id="PRO_0000442380" description="Ferredoxin--NADP reductase, leaf isozyme 2, chloroplastic" evidence="6">
    <location>
        <begin position="49"/>
        <end position="366"/>
    </location>
</feature>
<feature type="domain" description="FAD-binding FR-type" evidence="7">
    <location>
        <begin position="87"/>
        <end position="209"/>
    </location>
</feature>
<feature type="binding site" evidence="3">
    <location>
        <begin position="145"/>
        <end position="148"/>
    </location>
    <ligand>
        <name>FAD</name>
        <dbReference type="ChEBI" id="CHEBI:57692"/>
    </ligand>
</feature>
<feature type="binding site" evidence="3">
    <location>
        <position position="148"/>
    </location>
    <ligand>
        <name>NADP(+)</name>
        <dbReference type="ChEBI" id="CHEBI:58349"/>
    </ligand>
</feature>
<feature type="binding site" evidence="3">
    <location>
        <begin position="166"/>
        <end position="168"/>
    </location>
    <ligand>
        <name>FAD</name>
        <dbReference type="ChEBI" id="CHEBI:57692"/>
    </ligand>
</feature>
<feature type="binding site" evidence="3">
    <location>
        <position position="168"/>
    </location>
    <ligand>
        <name>NADP(+)</name>
        <dbReference type="ChEBI" id="CHEBI:58349"/>
    </ligand>
</feature>
<feature type="binding site" evidence="3">
    <location>
        <position position="172"/>
    </location>
    <ligand>
        <name>FAD</name>
        <dbReference type="ChEBI" id="CHEBI:57692"/>
    </ligand>
</feature>
<feature type="binding site" evidence="3">
    <location>
        <begin position="183"/>
        <end position="185"/>
    </location>
    <ligand>
        <name>FAD</name>
        <dbReference type="ChEBI" id="CHEBI:57692"/>
    </ligand>
</feature>
<feature type="binding site" evidence="2">
    <location>
        <position position="224"/>
    </location>
    <ligand>
        <name>FAD</name>
        <dbReference type="ChEBI" id="CHEBI:57692"/>
    </ligand>
</feature>
<feature type="binding site" evidence="3">
    <location>
        <position position="224"/>
    </location>
    <ligand>
        <name>NADP(+)</name>
        <dbReference type="ChEBI" id="CHEBI:58349"/>
    </ligand>
</feature>
<feature type="binding site" evidence="3">
    <location>
        <begin position="256"/>
        <end position="257"/>
    </location>
    <ligand>
        <name>NADP(+)</name>
        <dbReference type="ChEBI" id="CHEBI:58349"/>
    </ligand>
</feature>
<feature type="binding site" evidence="3">
    <location>
        <begin position="286"/>
        <end position="287"/>
    </location>
    <ligand>
        <name>NADP(+)</name>
        <dbReference type="ChEBI" id="CHEBI:58349"/>
    </ligand>
</feature>
<feature type="binding site" evidence="3">
    <location>
        <position position="296"/>
    </location>
    <ligand>
        <name>NADP(+)</name>
        <dbReference type="ChEBI" id="CHEBI:58349"/>
    </ligand>
</feature>
<feature type="binding site" evidence="3">
    <location>
        <begin position="325"/>
        <end position="326"/>
    </location>
    <ligand>
        <name>NADP(+)</name>
        <dbReference type="ChEBI" id="CHEBI:58349"/>
    </ligand>
</feature>
<feature type="binding site" evidence="3">
    <location>
        <position position="364"/>
    </location>
    <ligand>
        <name>NADP(+)</name>
        <dbReference type="ChEBI" id="CHEBI:58349"/>
    </ligand>
</feature>
<feature type="modified residue" description="Phosphoserine" evidence="5">
    <location>
        <position position="185"/>
    </location>
</feature>
<feature type="modified residue" description="Phosphothreonine" evidence="5">
    <location>
        <position position="216"/>
    </location>
</feature>
<feature type="disulfide bond" evidence="1">
    <location>
        <begin position="184"/>
        <end position="189"/>
    </location>
</feature>
<proteinExistence type="inferred from homology"/>
<sequence>MAAVNTVSSLPCSKAGAAVAGGAPRPSTCSVFYPPRCWSKRSSGNGVRAQASTTETTAAPAAEVTTKVEKVSKKQVDGVVTNKYRPKEPYTGRCLLNTRITGDDAPGETWHMVFSTDGEIPYREGQSIGVIPDGIDKNGKPHKLRLYSIASSAIGDFADSKTVSLCVKRLVYTNDKGEIVKGVCSNFLCDLKPGSDVKITGPVGKEMLMPKDPNATIIMLGTGTGIAPFRSFLWKMFFEEHDDYRFNGLAWLFLGVPTSSTLLYREEFERMKEIAPERFRLDFAVSREQTNAAGEKMYIQTRMAEYKDELWELLKKDNTYVYMCGLKGMEKGIDDIMIDLAAKDGIDWLDYKKQLKKSEQWNVEVY</sequence>
<name>FENR2_ORYSI</name>
<evidence type="ECO:0000250" key="1"/>
<evidence type="ECO:0000250" key="2">
    <source>
        <dbReference type="UniProtKB" id="P00455"/>
    </source>
</evidence>
<evidence type="ECO:0000250" key="3">
    <source>
        <dbReference type="UniProtKB" id="P10933"/>
    </source>
</evidence>
<evidence type="ECO:0000250" key="4">
    <source>
        <dbReference type="UniProtKB" id="Q6ZFJ3"/>
    </source>
</evidence>
<evidence type="ECO:0000250" key="5">
    <source>
        <dbReference type="UniProtKB" id="Q9FKW6"/>
    </source>
</evidence>
<evidence type="ECO:0000255" key="6"/>
<evidence type="ECO:0000255" key="7">
    <source>
        <dbReference type="PROSITE-ProRule" id="PRU00716"/>
    </source>
</evidence>
<evidence type="ECO:0000305" key="8"/>
<evidence type="ECO:0000312" key="9">
    <source>
        <dbReference type="EMBL" id="EAY84091.1"/>
    </source>
</evidence>
<accession>A2WZT1</accession>